<proteinExistence type="inferred from homology"/>
<name>HRI1_YEAS8</name>
<gene>
    <name type="primary">HRI1</name>
    <name type="ORF">EC1118_1L7_1607g</name>
</gene>
<reference key="1">
    <citation type="journal article" date="2009" name="Proc. Natl. Acad. Sci. U.S.A.">
        <title>Eukaryote-to-eukaryote gene transfer events revealed by the genome sequence of the wine yeast Saccharomyces cerevisiae EC1118.</title>
        <authorList>
            <person name="Novo M."/>
            <person name="Bigey F."/>
            <person name="Beyne E."/>
            <person name="Galeote V."/>
            <person name="Gavory F."/>
            <person name="Mallet S."/>
            <person name="Cambon B."/>
            <person name="Legras J.-L."/>
            <person name="Wincker P."/>
            <person name="Casaregola S."/>
            <person name="Dequin S."/>
        </authorList>
    </citation>
    <scope>NUCLEOTIDE SEQUENCE [LARGE SCALE GENOMIC DNA]</scope>
    <source>
        <strain>Lalvin EC1118 / Prise de mousse</strain>
    </source>
</reference>
<comment type="subunit">
    <text evidence="1">Interacts with HRR25. May interact with SEC72.</text>
</comment>
<comment type="subcellular location">
    <subcellularLocation>
        <location evidence="1">Cytoplasm</location>
    </subcellularLocation>
    <subcellularLocation>
        <location evidence="1">Nucleus</location>
    </subcellularLocation>
</comment>
<comment type="similarity">
    <text evidence="3">Belongs to the HRI1 family.</text>
</comment>
<feature type="chain" id="PRO_0000410816" description="Protein HRI1">
    <location>
        <begin position="1"/>
        <end position="244"/>
    </location>
</feature>
<feature type="modified residue" description="Phosphoserine" evidence="2">
    <location>
        <position position="143"/>
    </location>
</feature>
<keyword id="KW-0963">Cytoplasm</keyword>
<keyword id="KW-0539">Nucleus</keyword>
<keyword id="KW-0597">Phosphoprotein</keyword>
<organism>
    <name type="scientific">Saccharomyces cerevisiae (strain Lalvin EC1118 / Prise de mousse)</name>
    <name type="common">Baker's yeast</name>
    <dbReference type="NCBI Taxonomy" id="643680"/>
    <lineage>
        <taxon>Eukaryota</taxon>
        <taxon>Fungi</taxon>
        <taxon>Dikarya</taxon>
        <taxon>Ascomycota</taxon>
        <taxon>Saccharomycotina</taxon>
        <taxon>Saccharomycetes</taxon>
        <taxon>Saccharomycetales</taxon>
        <taxon>Saccharomycetaceae</taxon>
        <taxon>Saccharomyces</taxon>
    </lineage>
</organism>
<dbReference type="EMBL" id="FN393080">
    <property type="protein sequence ID" value="CAY81530.1"/>
    <property type="molecule type" value="Genomic_DNA"/>
</dbReference>
<dbReference type="SMR" id="C8ZDR4"/>
<dbReference type="HOGENOM" id="CLU_097607_0_0_1"/>
<dbReference type="OrthoDB" id="17082at4893"/>
<dbReference type="Proteomes" id="UP000000286">
    <property type="component" value="Chromosome XII, Scaffold EC1118_1L7"/>
</dbReference>
<dbReference type="GO" id="GO:0005737">
    <property type="term" value="C:cytoplasm"/>
    <property type="evidence" value="ECO:0007669"/>
    <property type="project" value="UniProtKB-SubCell"/>
</dbReference>
<dbReference type="GO" id="GO:0005634">
    <property type="term" value="C:nucleus"/>
    <property type="evidence" value="ECO:0007669"/>
    <property type="project" value="UniProtKB-SubCell"/>
</dbReference>
<dbReference type="CDD" id="cd11693">
    <property type="entry name" value="HRI1_C_like"/>
    <property type="match status" value="1"/>
</dbReference>
<dbReference type="CDD" id="cd11692">
    <property type="entry name" value="HRI1_N_like"/>
    <property type="match status" value="1"/>
</dbReference>
<dbReference type="Gene3D" id="2.40.128.310">
    <property type="entry name" value="Protein HRI1, C-terminal domain"/>
    <property type="match status" value="1"/>
</dbReference>
<dbReference type="Gene3D" id="2.40.128.320">
    <property type="entry name" value="Protein HRI1, N-terminal domain"/>
    <property type="match status" value="1"/>
</dbReference>
<dbReference type="InterPro" id="IPR031818">
    <property type="entry name" value="Hri1"/>
</dbReference>
<dbReference type="InterPro" id="IPR038744">
    <property type="entry name" value="Hri1_N"/>
</dbReference>
<dbReference type="InterPro" id="IPR043047">
    <property type="entry name" value="Hri1_N_sf"/>
</dbReference>
<dbReference type="Pfam" id="PF16815">
    <property type="entry name" value="HRI1"/>
    <property type="match status" value="1"/>
</dbReference>
<accession>C8ZDR4</accession>
<protein>
    <recommendedName>
        <fullName>Protein HRI1</fullName>
    </recommendedName>
    <alternativeName>
        <fullName>HRR25-interacting protein 1</fullName>
    </alternativeName>
</protein>
<sequence>MPALLKRLLFQVGPHPNERTFTLSSVSTDGHYISLRPFVKPSGDELSFPFEWAFAGTNETVKVNDQGNGVVTQDFNFWLDTNVYLNVPNTHRGEVNTTWKNWDSGCVEETGAVYPFGADKESVSFRELWQPVDPSREDLVIVSPNNEKFSSNARSIVLKVTDEAYDGLVIVIGRWIQGFLSQKNNNTIEGLNFIRLLEKDSGKSEFLLSYGKEVNKIPQSYENLKKGSTVTSNGLNWEVIEYHA</sequence>
<evidence type="ECO:0000250" key="1"/>
<evidence type="ECO:0000250" key="2">
    <source>
        <dbReference type="UniProtKB" id="Q05905"/>
    </source>
</evidence>
<evidence type="ECO:0000305" key="3"/>